<protein>
    <recommendedName>
        <fullName evidence="1">Cytidylate kinase</fullName>
        <shortName evidence="1">CK</shortName>
        <ecNumber evidence="1">2.7.4.25</ecNumber>
    </recommendedName>
    <alternativeName>
        <fullName evidence="1">Cytidine monophosphate kinase</fullName>
        <shortName evidence="1">CMP kinase</shortName>
    </alternativeName>
</protein>
<name>KCY_SOLUE</name>
<gene>
    <name evidence="1" type="primary">cmk</name>
    <name type="ordered locus">Acid_0051</name>
</gene>
<feature type="chain" id="PRO_1000048288" description="Cytidylate kinase">
    <location>
        <begin position="1"/>
        <end position="232"/>
    </location>
</feature>
<feature type="region of interest" description="Disordered" evidence="2">
    <location>
        <begin position="164"/>
        <end position="192"/>
    </location>
</feature>
<feature type="compositionally biased region" description="Basic and acidic residues" evidence="2">
    <location>
        <begin position="178"/>
        <end position="189"/>
    </location>
</feature>
<feature type="binding site" evidence="1">
    <location>
        <begin position="15"/>
        <end position="23"/>
    </location>
    <ligand>
        <name>ATP</name>
        <dbReference type="ChEBI" id="CHEBI:30616"/>
    </ligand>
</feature>
<organism>
    <name type="scientific">Solibacter usitatus (strain Ellin6076)</name>
    <dbReference type="NCBI Taxonomy" id="234267"/>
    <lineage>
        <taxon>Bacteria</taxon>
        <taxon>Pseudomonadati</taxon>
        <taxon>Acidobacteriota</taxon>
        <taxon>Terriglobia</taxon>
        <taxon>Bryobacterales</taxon>
        <taxon>Solibacteraceae</taxon>
        <taxon>Candidatus Solibacter</taxon>
    </lineage>
</organism>
<comment type="catalytic activity">
    <reaction evidence="1">
        <text>CMP + ATP = CDP + ADP</text>
        <dbReference type="Rhea" id="RHEA:11600"/>
        <dbReference type="ChEBI" id="CHEBI:30616"/>
        <dbReference type="ChEBI" id="CHEBI:58069"/>
        <dbReference type="ChEBI" id="CHEBI:60377"/>
        <dbReference type="ChEBI" id="CHEBI:456216"/>
        <dbReference type="EC" id="2.7.4.25"/>
    </reaction>
</comment>
<comment type="catalytic activity">
    <reaction evidence="1">
        <text>dCMP + ATP = dCDP + ADP</text>
        <dbReference type="Rhea" id="RHEA:25094"/>
        <dbReference type="ChEBI" id="CHEBI:30616"/>
        <dbReference type="ChEBI" id="CHEBI:57566"/>
        <dbReference type="ChEBI" id="CHEBI:58593"/>
        <dbReference type="ChEBI" id="CHEBI:456216"/>
        <dbReference type="EC" id="2.7.4.25"/>
    </reaction>
</comment>
<comment type="subcellular location">
    <subcellularLocation>
        <location evidence="1">Cytoplasm</location>
    </subcellularLocation>
</comment>
<comment type="similarity">
    <text evidence="1">Belongs to the cytidylate kinase family. Type 1 subfamily.</text>
</comment>
<keyword id="KW-0067">ATP-binding</keyword>
<keyword id="KW-0963">Cytoplasm</keyword>
<keyword id="KW-0418">Kinase</keyword>
<keyword id="KW-0547">Nucleotide-binding</keyword>
<keyword id="KW-0808">Transferase</keyword>
<dbReference type="EC" id="2.7.4.25" evidence="1"/>
<dbReference type="EMBL" id="CP000473">
    <property type="protein sequence ID" value="ABJ81067.1"/>
    <property type="molecule type" value="Genomic_DNA"/>
</dbReference>
<dbReference type="SMR" id="Q02CZ9"/>
<dbReference type="FunCoup" id="Q02CZ9">
    <property type="interactions" value="386"/>
</dbReference>
<dbReference type="STRING" id="234267.Acid_0051"/>
<dbReference type="KEGG" id="sus:Acid_0051"/>
<dbReference type="eggNOG" id="COG0283">
    <property type="taxonomic scope" value="Bacteria"/>
</dbReference>
<dbReference type="HOGENOM" id="CLU_079959_0_2_0"/>
<dbReference type="InParanoid" id="Q02CZ9"/>
<dbReference type="OrthoDB" id="9807434at2"/>
<dbReference type="GO" id="GO:0005829">
    <property type="term" value="C:cytosol"/>
    <property type="evidence" value="ECO:0007669"/>
    <property type="project" value="TreeGrafter"/>
</dbReference>
<dbReference type="GO" id="GO:0005524">
    <property type="term" value="F:ATP binding"/>
    <property type="evidence" value="ECO:0007669"/>
    <property type="project" value="UniProtKB-UniRule"/>
</dbReference>
<dbReference type="GO" id="GO:0036430">
    <property type="term" value="F:CMP kinase activity"/>
    <property type="evidence" value="ECO:0007669"/>
    <property type="project" value="RHEA"/>
</dbReference>
<dbReference type="GO" id="GO:0036431">
    <property type="term" value="F:dCMP kinase activity"/>
    <property type="evidence" value="ECO:0007669"/>
    <property type="project" value="RHEA"/>
</dbReference>
<dbReference type="GO" id="GO:0015949">
    <property type="term" value="P:nucleobase-containing small molecule interconversion"/>
    <property type="evidence" value="ECO:0007669"/>
    <property type="project" value="TreeGrafter"/>
</dbReference>
<dbReference type="GO" id="GO:0006220">
    <property type="term" value="P:pyrimidine nucleotide metabolic process"/>
    <property type="evidence" value="ECO:0007669"/>
    <property type="project" value="UniProtKB-UniRule"/>
</dbReference>
<dbReference type="CDD" id="cd02020">
    <property type="entry name" value="CMPK"/>
    <property type="match status" value="1"/>
</dbReference>
<dbReference type="Gene3D" id="3.40.50.300">
    <property type="entry name" value="P-loop containing nucleotide triphosphate hydrolases"/>
    <property type="match status" value="1"/>
</dbReference>
<dbReference type="HAMAP" id="MF_00238">
    <property type="entry name" value="Cytidyl_kinase_type1"/>
    <property type="match status" value="1"/>
</dbReference>
<dbReference type="InterPro" id="IPR003136">
    <property type="entry name" value="Cytidylate_kin"/>
</dbReference>
<dbReference type="InterPro" id="IPR011994">
    <property type="entry name" value="Cytidylate_kinase_dom"/>
</dbReference>
<dbReference type="InterPro" id="IPR027417">
    <property type="entry name" value="P-loop_NTPase"/>
</dbReference>
<dbReference type="NCBIfam" id="TIGR00017">
    <property type="entry name" value="cmk"/>
    <property type="match status" value="1"/>
</dbReference>
<dbReference type="PANTHER" id="PTHR21299:SF2">
    <property type="entry name" value="CYTIDYLATE KINASE"/>
    <property type="match status" value="1"/>
</dbReference>
<dbReference type="PANTHER" id="PTHR21299">
    <property type="entry name" value="CYTIDYLATE KINASE/PANTOATE-BETA-ALANINE LIGASE"/>
    <property type="match status" value="1"/>
</dbReference>
<dbReference type="Pfam" id="PF02224">
    <property type="entry name" value="Cytidylate_kin"/>
    <property type="match status" value="1"/>
</dbReference>
<dbReference type="SUPFAM" id="SSF52540">
    <property type="entry name" value="P-loop containing nucleoside triphosphate hydrolases"/>
    <property type="match status" value="1"/>
</dbReference>
<sequence>MADTKQKRVVVAIDGPAGAGKSTIAKGLASRLGFIYIDTGAMYRAVALWALRQGVDSGDMHRMEQLAMAAQIELGPGTISLNGEDVTQAIRTPEVSNGASKIGVIPGVRRAMVAKQREIGERTSVVMEGRDIGTVVFPQADVKIFLDANPDERVRRRYQEIRTKEDPPPISQGQLAAEMKERDMRDSTRADAPLAQAPDAVYLDSTALSIAEVEEAILKIVRSRVTNGRDFS</sequence>
<accession>Q02CZ9</accession>
<proteinExistence type="inferred from homology"/>
<evidence type="ECO:0000255" key="1">
    <source>
        <dbReference type="HAMAP-Rule" id="MF_00238"/>
    </source>
</evidence>
<evidence type="ECO:0000256" key="2">
    <source>
        <dbReference type="SAM" id="MobiDB-lite"/>
    </source>
</evidence>
<reference key="1">
    <citation type="journal article" date="2009" name="Appl. Environ. Microbiol.">
        <title>Three genomes from the phylum Acidobacteria provide insight into the lifestyles of these microorganisms in soils.</title>
        <authorList>
            <person name="Ward N.L."/>
            <person name="Challacombe J.F."/>
            <person name="Janssen P.H."/>
            <person name="Henrissat B."/>
            <person name="Coutinho P.M."/>
            <person name="Wu M."/>
            <person name="Xie G."/>
            <person name="Haft D.H."/>
            <person name="Sait M."/>
            <person name="Badger J."/>
            <person name="Barabote R.D."/>
            <person name="Bradley B."/>
            <person name="Brettin T.S."/>
            <person name="Brinkac L.M."/>
            <person name="Bruce D."/>
            <person name="Creasy T."/>
            <person name="Daugherty S.C."/>
            <person name="Davidsen T.M."/>
            <person name="DeBoy R.T."/>
            <person name="Detter J.C."/>
            <person name="Dodson R.J."/>
            <person name="Durkin A.S."/>
            <person name="Ganapathy A."/>
            <person name="Gwinn-Giglio M."/>
            <person name="Han C.S."/>
            <person name="Khouri H."/>
            <person name="Kiss H."/>
            <person name="Kothari S.P."/>
            <person name="Madupu R."/>
            <person name="Nelson K.E."/>
            <person name="Nelson W.C."/>
            <person name="Paulsen I."/>
            <person name="Penn K."/>
            <person name="Ren Q."/>
            <person name="Rosovitz M.J."/>
            <person name="Selengut J.D."/>
            <person name="Shrivastava S."/>
            <person name="Sullivan S.A."/>
            <person name="Tapia R."/>
            <person name="Thompson L.S."/>
            <person name="Watkins K.L."/>
            <person name="Yang Q."/>
            <person name="Yu C."/>
            <person name="Zafar N."/>
            <person name="Zhou L."/>
            <person name="Kuske C.R."/>
        </authorList>
    </citation>
    <scope>NUCLEOTIDE SEQUENCE [LARGE SCALE GENOMIC DNA]</scope>
    <source>
        <strain>Ellin6076</strain>
    </source>
</reference>